<gene>
    <name type="primary">Adam1b</name>
</gene>
<feature type="signal peptide" evidence="2">
    <location>
        <begin position="1"/>
        <end position="33"/>
    </location>
</feature>
<feature type="propeptide" id="PRO_0000029034" evidence="2">
    <location>
        <begin position="34"/>
        <end status="unknown"/>
    </location>
</feature>
<feature type="chain" id="PRO_0000029035" description="Disintegrin and metalloproteinase domain-containing protein 1b">
    <location>
        <begin status="unknown"/>
        <end position="806"/>
    </location>
</feature>
<feature type="topological domain" description="Extracellular" evidence="2">
    <location>
        <begin status="unknown"/>
        <end position="704"/>
    </location>
</feature>
<feature type="transmembrane region" description="Helical" evidence="2">
    <location>
        <begin position="705"/>
        <end position="725"/>
    </location>
</feature>
<feature type="topological domain" description="Cytoplasmic" evidence="2">
    <location>
        <begin position="726"/>
        <end position="806"/>
    </location>
</feature>
<feature type="domain" description="Peptidase M12B" evidence="5">
    <location>
        <begin position="203"/>
        <end position="397"/>
    </location>
</feature>
<feature type="domain" description="Disintegrin" evidence="3">
    <location>
        <begin position="406"/>
        <end position="490"/>
    </location>
</feature>
<feature type="domain" description="EGF-like" evidence="4">
    <location>
        <begin position="631"/>
        <end position="665"/>
    </location>
</feature>
<feature type="region of interest" description="Disordered" evidence="7">
    <location>
        <begin position="169"/>
        <end position="188"/>
    </location>
</feature>
<feature type="region of interest" description="Disordered" evidence="7">
    <location>
        <begin position="668"/>
        <end position="694"/>
    </location>
</feature>
<feature type="region of interest" description="Disordered" evidence="7">
    <location>
        <begin position="735"/>
        <end position="806"/>
    </location>
</feature>
<feature type="compositionally biased region" description="Polar residues" evidence="7">
    <location>
        <begin position="680"/>
        <end position="694"/>
    </location>
</feature>
<feature type="compositionally biased region" description="Acidic residues" evidence="7">
    <location>
        <begin position="740"/>
        <end position="806"/>
    </location>
</feature>
<feature type="active site" evidence="5 6">
    <location>
        <position position="339"/>
    </location>
</feature>
<feature type="binding site" evidence="1">
    <location>
        <position position="338"/>
    </location>
    <ligand>
        <name>Zn(2+)</name>
        <dbReference type="ChEBI" id="CHEBI:29105"/>
        <note>catalytic</note>
    </ligand>
</feature>
<feature type="binding site" evidence="1">
    <location>
        <position position="342"/>
    </location>
    <ligand>
        <name>Zn(2+)</name>
        <dbReference type="ChEBI" id="CHEBI:29105"/>
        <note>catalytic</note>
    </ligand>
</feature>
<feature type="binding site" evidence="1">
    <location>
        <position position="348"/>
    </location>
    <ligand>
        <name>Zn(2+)</name>
        <dbReference type="ChEBI" id="CHEBI:29105"/>
        <note>catalytic</note>
    </ligand>
</feature>
<feature type="glycosylation site" description="N-linked (GlcNAc...) asparagine" evidence="2">
    <location>
        <position position="224"/>
    </location>
</feature>
<feature type="glycosylation site" description="N-linked (GlcNAc...) asparagine" evidence="2">
    <location>
        <position position="375"/>
    </location>
</feature>
<feature type="glycosylation site" description="N-linked (GlcNAc...) asparagine" evidence="2">
    <location>
        <position position="476"/>
    </location>
</feature>
<feature type="glycosylation site" description="N-linked (GlcNAc...) asparagine" evidence="2">
    <location>
        <position position="680"/>
    </location>
</feature>
<feature type="glycosylation site" description="N-linked (GlcNAc...) asparagine" evidence="2">
    <location>
        <position position="683"/>
    </location>
</feature>
<feature type="glycosylation site" description="N-linked (GlcNAc...) asparagine" evidence="2">
    <location>
        <position position="690"/>
    </location>
</feature>
<feature type="disulfide bond" evidence="1">
    <location>
        <begin position="313"/>
        <end position="392"/>
    </location>
</feature>
<feature type="disulfide bond" evidence="1">
    <location>
        <begin position="353"/>
        <end position="376"/>
    </location>
</feature>
<feature type="disulfide bond" evidence="1">
    <location>
        <begin position="355"/>
        <end position="361"/>
    </location>
</feature>
<feature type="disulfide bond" evidence="1">
    <location>
        <begin position="462"/>
        <end position="482"/>
    </location>
</feature>
<feature type="disulfide bond" evidence="2">
    <location>
        <begin position="635"/>
        <end position="647"/>
    </location>
</feature>
<feature type="disulfide bond" evidence="2">
    <location>
        <begin position="641"/>
        <end position="653"/>
    </location>
</feature>
<feature type="disulfide bond" evidence="2">
    <location>
        <begin position="655"/>
        <end position="664"/>
    </location>
</feature>
<feature type="sequence conflict" description="In Ref. 1; BAB86767." evidence="10" ref="1">
    <original>M</original>
    <variation>R</variation>
    <location>
        <position position="363"/>
    </location>
</feature>
<keyword id="KW-1015">Disulfide bond</keyword>
<keyword id="KW-0245">EGF-like domain</keyword>
<keyword id="KW-0325">Glycoprotein</keyword>
<keyword id="KW-0378">Hydrolase</keyword>
<keyword id="KW-0472">Membrane</keyword>
<keyword id="KW-0479">Metal-binding</keyword>
<keyword id="KW-0482">Metalloprotease</keyword>
<keyword id="KW-0645">Protease</keyword>
<keyword id="KW-1185">Reference proteome</keyword>
<keyword id="KW-0732">Signal</keyword>
<keyword id="KW-0812">Transmembrane</keyword>
<keyword id="KW-1133">Transmembrane helix</keyword>
<keyword id="KW-0862">Zinc</keyword>
<comment type="function">
    <text evidence="9">May play a role in spermatogenesis and sperm maturation.</text>
</comment>
<comment type="subunit">
    <text>Heterodimer with ADAM2/fertilin subunit beta.</text>
</comment>
<comment type="subcellular location">
    <subcellularLocation>
        <location evidence="10">Membrane</location>
        <topology evidence="10">Single-pass type I membrane protein</topology>
    </subcellularLocation>
</comment>
<comment type="tissue specificity">
    <text evidence="8">Testis.</text>
</comment>
<comment type="developmental stage">
    <text evidence="8">Expression is detected 20 days after birth and increases gradually up to day 60.</text>
</comment>
<name>ADM1B_MOUSE</name>
<sequence>MERLKLGKIPEHWCIRLVAMLLLAIIFLPSTFCDIGSVYNSSYETVIPERLPGKGGKDPGGKVSYMLLMQGQKQLLHLEVKGHYPENNFPVYSYHNGILRQEMPLLSQDCHYEGYMEGVPGSFVSVNICSGLRGVLIKEETSYGIEPMLSSKNFEHVLYTMEHQPVVSCSVTPKDSPGDTSHPPRSRKPDDLLVLTDWWSHTKYVEMFVVVNHQRFQMWGSNINETVQAVMDIIALANSFTRGINTEVVLVGLEIWTEGDPIEVPVDLQTTLRNFNFWRQEKLVGRVRHDVAHLIVGHRPGENEGQAFLRGACSGEFAAAVEAFHHEDVLLFAALMAHELGHNLGIQHDHPTCTCGPKHFCLMGEKIGKDSGFSNCSSDHFLRFLHDHRGVCLLDEPGRQSRMRRAANCGNGVVEDLEQCDCGSDCDKSQCCDENCKLKGNSVCSTELCCFKCNFKKEGDVCRPADGPCDLEEYCNGTSAACPSDRKAQDGSKCHESFLCFNGQCMDPTFQCSRIFGHGSRSASDYCYTSLNSRGDQFGNCGSSSQFPKKYTKCSDKNVMCGKLICTEVAFLPQIQPNNLLLQVPETEDWCWSVAVFDMRDSLHEEYVKDNTYCGKDKVCKNSICEDFTPFSFPCSPSKQCNKHGVCNDLGNCHCSFGFAPPDCKEEGTGGSVDSGPAVNLSNDSSPGPNSTQSSTEELILNLKLIVLAVILVLMILLIIICIISAYTKSETASEAGPSELEELPEGEKEEQEEVLPEEAKGEEEELEYGKEEAEEQGAVEEEGAEEANEEAAAEKKDEDEEEGEE</sequence>
<protein>
    <recommendedName>
        <fullName>Disintegrin and metalloproteinase domain-containing protein 1b</fullName>
        <shortName>ADAM 1b</shortName>
        <ecNumber>3.4.24.-</ecNumber>
    </recommendedName>
    <alternativeName>
        <fullName>Fertilin subunit alpha-b</fullName>
    </alternativeName>
</protein>
<dbReference type="EC" id="3.4.24.-"/>
<dbReference type="EMBL" id="AB048843">
    <property type="protein sequence ID" value="BAB86767.1"/>
    <property type="molecule type" value="Genomic_DNA"/>
</dbReference>
<dbReference type="EMBL" id="BC140979">
    <property type="protein sequence ID" value="AAI40980.1"/>
    <property type="molecule type" value="mRNA"/>
</dbReference>
<dbReference type="EMBL" id="AF167406">
    <property type="protein sequence ID" value="AAD48845.1"/>
    <property type="molecule type" value="mRNA"/>
</dbReference>
<dbReference type="CCDS" id="CCDS19636.1"/>
<dbReference type="RefSeq" id="NP_742123.2">
    <property type="nucleotide sequence ID" value="NM_172125.3"/>
</dbReference>
<dbReference type="SMR" id="Q8R534"/>
<dbReference type="BioGRID" id="235034">
    <property type="interactions" value="9"/>
</dbReference>
<dbReference type="CORUM" id="Q8R534"/>
<dbReference type="FunCoup" id="Q8R534">
    <property type="interactions" value="18"/>
</dbReference>
<dbReference type="STRING" id="10090.ENSMUSP00000078343"/>
<dbReference type="MEROPS" id="M12.203"/>
<dbReference type="GlyCosmos" id="Q8R534">
    <property type="glycosylation" value="6 sites, No reported glycans"/>
</dbReference>
<dbReference type="GlyGen" id="Q8R534">
    <property type="glycosylation" value="6 sites"/>
</dbReference>
<dbReference type="iPTMnet" id="Q8R534"/>
<dbReference type="PhosphoSitePlus" id="Q8R534"/>
<dbReference type="SwissPalm" id="Q8R534"/>
<dbReference type="PaxDb" id="10090-ENSMUSP00000078343"/>
<dbReference type="ProteomicsDB" id="296111"/>
<dbReference type="DNASU" id="280667"/>
<dbReference type="Ensembl" id="ENSMUST00000079368.5">
    <property type="protein sequence ID" value="ENSMUSP00000078343.4"/>
    <property type="gene ID" value="ENSMUSG00000062438.5"/>
</dbReference>
<dbReference type="GeneID" id="280667"/>
<dbReference type="KEGG" id="mmu:280667"/>
<dbReference type="UCSC" id="uc008zjn.1">
    <property type="organism name" value="mouse"/>
</dbReference>
<dbReference type="AGR" id="MGI:2429506"/>
<dbReference type="CTD" id="100420505"/>
<dbReference type="MGI" id="MGI:2429506">
    <property type="gene designation" value="Adam1b"/>
</dbReference>
<dbReference type="VEuPathDB" id="HostDB:ENSMUSG00000062438"/>
<dbReference type="eggNOG" id="KOG3607">
    <property type="taxonomic scope" value="Eukaryota"/>
</dbReference>
<dbReference type="GeneTree" id="ENSGT00940000161891"/>
<dbReference type="HOGENOM" id="CLU_012714_4_0_1"/>
<dbReference type="InParanoid" id="Q8R534"/>
<dbReference type="OMA" id="CAPEKIC"/>
<dbReference type="OrthoDB" id="5951731at2759"/>
<dbReference type="PhylomeDB" id="Q8R534"/>
<dbReference type="TreeFam" id="TF314733"/>
<dbReference type="BRENDA" id="3.4.24.B8">
    <property type="organism ID" value="3474"/>
</dbReference>
<dbReference type="BioGRID-ORCS" id="280667">
    <property type="hits" value="3 hits in 77 CRISPR screens"/>
</dbReference>
<dbReference type="ChiTaRS" id="Adam1b">
    <property type="organism name" value="mouse"/>
</dbReference>
<dbReference type="PRO" id="PR:Q8R534"/>
<dbReference type="Proteomes" id="UP000000589">
    <property type="component" value="Chromosome 5"/>
</dbReference>
<dbReference type="RNAct" id="Q8R534">
    <property type="molecule type" value="protein"/>
</dbReference>
<dbReference type="Bgee" id="ENSMUSG00000062438">
    <property type="expression patterns" value="Expressed in spermatid and 5 other cell types or tissues"/>
</dbReference>
<dbReference type="GO" id="GO:0016020">
    <property type="term" value="C:membrane"/>
    <property type="evidence" value="ECO:0000303"/>
    <property type="project" value="UniProtKB"/>
</dbReference>
<dbReference type="GO" id="GO:0046872">
    <property type="term" value="F:metal ion binding"/>
    <property type="evidence" value="ECO:0007669"/>
    <property type="project" value="UniProtKB-KW"/>
</dbReference>
<dbReference type="GO" id="GO:0004222">
    <property type="term" value="F:metalloendopeptidase activity"/>
    <property type="evidence" value="ECO:0007669"/>
    <property type="project" value="InterPro"/>
</dbReference>
<dbReference type="GO" id="GO:0008237">
    <property type="term" value="F:metallopeptidase activity"/>
    <property type="evidence" value="ECO:0000303"/>
    <property type="project" value="UniProtKB"/>
</dbReference>
<dbReference type="GO" id="GO:0006508">
    <property type="term" value="P:proteolysis"/>
    <property type="evidence" value="ECO:0000303"/>
    <property type="project" value="UniProtKB"/>
</dbReference>
<dbReference type="GO" id="GO:0007283">
    <property type="term" value="P:spermatogenesis"/>
    <property type="evidence" value="ECO:0000303"/>
    <property type="project" value="UniProtKB"/>
</dbReference>
<dbReference type="CDD" id="cd04269">
    <property type="entry name" value="ZnMc_adamalysin_II_like"/>
    <property type="match status" value="1"/>
</dbReference>
<dbReference type="FunFam" id="4.10.70.10:FF:000003">
    <property type="entry name" value="Disintegrin and metalloproteinase domain-containing protein 17"/>
    <property type="match status" value="1"/>
</dbReference>
<dbReference type="FunFam" id="3.40.390.10:FF:000002">
    <property type="entry name" value="Disintegrin and metalloproteinase domain-containing protein 22"/>
    <property type="match status" value="1"/>
</dbReference>
<dbReference type="Gene3D" id="3.40.390.10">
    <property type="entry name" value="Collagenase (Catalytic Domain)"/>
    <property type="match status" value="1"/>
</dbReference>
<dbReference type="Gene3D" id="4.10.70.10">
    <property type="entry name" value="Disintegrin domain"/>
    <property type="match status" value="1"/>
</dbReference>
<dbReference type="InterPro" id="IPR006586">
    <property type="entry name" value="ADAM_Cys-rich"/>
</dbReference>
<dbReference type="InterPro" id="IPR001762">
    <property type="entry name" value="Disintegrin_dom"/>
</dbReference>
<dbReference type="InterPro" id="IPR036436">
    <property type="entry name" value="Disintegrin_dom_sf"/>
</dbReference>
<dbReference type="InterPro" id="IPR000742">
    <property type="entry name" value="EGF-like_dom"/>
</dbReference>
<dbReference type="InterPro" id="IPR024079">
    <property type="entry name" value="MetalloPept_cat_dom_sf"/>
</dbReference>
<dbReference type="InterPro" id="IPR001590">
    <property type="entry name" value="Peptidase_M12B"/>
</dbReference>
<dbReference type="InterPro" id="IPR034027">
    <property type="entry name" value="Reprolysin_adamalysin"/>
</dbReference>
<dbReference type="PANTHER" id="PTHR11905">
    <property type="entry name" value="ADAM A DISINTEGRIN AND METALLOPROTEASE DOMAIN"/>
    <property type="match status" value="1"/>
</dbReference>
<dbReference type="PANTHER" id="PTHR11905:SF254">
    <property type="entry name" value="DISINTEGRIN AND METALLOPROTEINASE DOMAIN-CONTAINING PROTEIN 1B"/>
    <property type="match status" value="1"/>
</dbReference>
<dbReference type="Pfam" id="PF08516">
    <property type="entry name" value="ADAM_CR"/>
    <property type="match status" value="1"/>
</dbReference>
<dbReference type="Pfam" id="PF00200">
    <property type="entry name" value="Disintegrin"/>
    <property type="match status" value="1"/>
</dbReference>
<dbReference type="Pfam" id="PF01421">
    <property type="entry name" value="Reprolysin"/>
    <property type="match status" value="1"/>
</dbReference>
<dbReference type="PRINTS" id="PR00289">
    <property type="entry name" value="DISINTEGRIN"/>
</dbReference>
<dbReference type="SMART" id="SM00608">
    <property type="entry name" value="ACR"/>
    <property type="match status" value="1"/>
</dbReference>
<dbReference type="SMART" id="SM00050">
    <property type="entry name" value="DISIN"/>
    <property type="match status" value="1"/>
</dbReference>
<dbReference type="SUPFAM" id="SSF57552">
    <property type="entry name" value="Blood coagulation inhibitor (disintegrin)"/>
    <property type="match status" value="1"/>
</dbReference>
<dbReference type="SUPFAM" id="SSF55486">
    <property type="entry name" value="Metalloproteases ('zincins'), catalytic domain"/>
    <property type="match status" value="1"/>
</dbReference>
<dbReference type="PROSITE" id="PS50215">
    <property type="entry name" value="ADAM_MEPRO"/>
    <property type="match status" value="1"/>
</dbReference>
<dbReference type="PROSITE" id="PS50214">
    <property type="entry name" value="DISINTEGRIN_2"/>
    <property type="match status" value="1"/>
</dbReference>
<dbReference type="PROSITE" id="PS01186">
    <property type="entry name" value="EGF_2"/>
    <property type="match status" value="1"/>
</dbReference>
<dbReference type="PROSITE" id="PS50026">
    <property type="entry name" value="EGF_3"/>
    <property type="match status" value="1"/>
</dbReference>
<dbReference type="PROSITE" id="PS00142">
    <property type="entry name" value="ZINC_PROTEASE"/>
    <property type="match status" value="1"/>
</dbReference>
<organism evidence="11">
    <name type="scientific">Mus musculus</name>
    <name type="common">Mouse</name>
    <dbReference type="NCBI Taxonomy" id="10090"/>
    <lineage>
        <taxon>Eukaryota</taxon>
        <taxon>Metazoa</taxon>
        <taxon>Chordata</taxon>
        <taxon>Craniata</taxon>
        <taxon>Vertebrata</taxon>
        <taxon>Euteleostomi</taxon>
        <taxon>Mammalia</taxon>
        <taxon>Eutheria</taxon>
        <taxon>Euarchontoglires</taxon>
        <taxon>Glires</taxon>
        <taxon>Rodentia</taxon>
        <taxon>Myomorpha</taxon>
        <taxon>Muroidea</taxon>
        <taxon>Muridae</taxon>
        <taxon>Murinae</taxon>
        <taxon>Mus</taxon>
        <taxon>Mus</taxon>
    </lineage>
</organism>
<reference evidence="10" key="1">
    <citation type="journal article" date="2002" name="Gene">
        <title>The ADAM1a and ADAM1b genes, instead of the ADAM1 (fertilin alpha) gene, are localized on mouse chromosome 5.</title>
        <authorList>
            <person name="Nishimura H."/>
            <person name="Kim E."/>
            <person name="Fujimori T."/>
            <person name="Kashiwabara S."/>
            <person name="Kuroiwa A."/>
            <person name="Matsuda Y."/>
            <person name="Baba T."/>
        </authorList>
    </citation>
    <scope>NUCLEOTIDE SEQUENCE [GENOMIC DNA]</scope>
    <scope>TISSUE SPECIFICITY</scope>
    <scope>DEVELOPMENTAL STAGE</scope>
</reference>
<reference key="2">
    <citation type="journal article" date="2004" name="Genome Res.">
        <title>The status, quality, and expansion of the NIH full-length cDNA project: the Mammalian Gene Collection (MGC).</title>
        <authorList>
            <consortium name="The MGC Project Team"/>
        </authorList>
    </citation>
    <scope>NUCLEOTIDE SEQUENCE [LARGE SCALE MRNA]</scope>
    <source>
        <tissue>Brain</tissue>
    </source>
</reference>
<reference key="3">
    <citation type="journal article" date="1999" name="Gene">
        <title>Identification of four novel ADAMs with potential roles in spermatogenesis and fertilization.</title>
        <authorList>
            <person name="Zhu G.-Z."/>
            <person name="Lin Y."/>
            <person name="Myles D.G."/>
            <person name="Primakoff P."/>
        </authorList>
    </citation>
    <scope>NUCLEOTIDE SEQUENCE [MRNA] OF 1-331</scope>
</reference>
<reference key="4">
    <citation type="journal article" date="2010" name="Cell">
        <title>A tissue-specific atlas of mouse protein phosphorylation and expression.</title>
        <authorList>
            <person name="Huttlin E.L."/>
            <person name="Jedrychowski M.P."/>
            <person name="Elias J.E."/>
            <person name="Goswami T."/>
            <person name="Rad R."/>
            <person name="Beausoleil S.A."/>
            <person name="Villen J."/>
            <person name="Haas W."/>
            <person name="Sowa M.E."/>
            <person name="Gygi S.P."/>
        </authorList>
    </citation>
    <scope>IDENTIFICATION BY MASS SPECTROMETRY [LARGE SCALE ANALYSIS]</scope>
    <source>
        <tissue>Testis</tissue>
    </source>
</reference>
<evidence type="ECO:0000250" key="1"/>
<evidence type="ECO:0000255" key="2"/>
<evidence type="ECO:0000255" key="3">
    <source>
        <dbReference type="PROSITE-ProRule" id="PRU00068"/>
    </source>
</evidence>
<evidence type="ECO:0000255" key="4">
    <source>
        <dbReference type="PROSITE-ProRule" id="PRU00076"/>
    </source>
</evidence>
<evidence type="ECO:0000255" key="5">
    <source>
        <dbReference type="PROSITE-ProRule" id="PRU00276"/>
    </source>
</evidence>
<evidence type="ECO:0000255" key="6">
    <source>
        <dbReference type="PROSITE-ProRule" id="PRU10095"/>
    </source>
</evidence>
<evidence type="ECO:0000256" key="7">
    <source>
        <dbReference type="SAM" id="MobiDB-lite"/>
    </source>
</evidence>
<evidence type="ECO:0000269" key="8">
    <source>
    </source>
</evidence>
<evidence type="ECO:0000303" key="9">
    <source>
    </source>
</evidence>
<evidence type="ECO:0000305" key="10"/>
<evidence type="ECO:0000312" key="11">
    <source>
        <dbReference type="EMBL" id="BAB86767.1"/>
    </source>
</evidence>
<proteinExistence type="evidence at protein level"/>
<accession>Q8R534</accession>
<accession>B2RU57</accession>
<accession>Q9R156</accession>